<proteinExistence type="inferred from homology"/>
<name>RL28_ECO8A</name>
<gene>
    <name evidence="1" type="primary">rpmB</name>
    <name type="ordered locus">ECIAI1_3807</name>
</gene>
<organism>
    <name type="scientific">Escherichia coli O8 (strain IAI1)</name>
    <dbReference type="NCBI Taxonomy" id="585034"/>
    <lineage>
        <taxon>Bacteria</taxon>
        <taxon>Pseudomonadati</taxon>
        <taxon>Pseudomonadota</taxon>
        <taxon>Gammaproteobacteria</taxon>
        <taxon>Enterobacterales</taxon>
        <taxon>Enterobacteriaceae</taxon>
        <taxon>Escherichia</taxon>
    </lineage>
</organism>
<reference key="1">
    <citation type="journal article" date="2009" name="PLoS Genet.">
        <title>Organised genome dynamics in the Escherichia coli species results in highly diverse adaptive paths.</title>
        <authorList>
            <person name="Touchon M."/>
            <person name="Hoede C."/>
            <person name="Tenaillon O."/>
            <person name="Barbe V."/>
            <person name="Baeriswyl S."/>
            <person name="Bidet P."/>
            <person name="Bingen E."/>
            <person name="Bonacorsi S."/>
            <person name="Bouchier C."/>
            <person name="Bouvet O."/>
            <person name="Calteau A."/>
            <person name="Chiapello H."/>
            <person name="Clermont O."/>
            <person name="Cruveiller S."/>
            <person name="Danchin A."/>
            <person name="Diard M."/>
            <person name="Dossat C."/>
            <person name="Karoui M.E."/>
            <person name="Frapy E."/>
            <person name="Garry L."/>
            <person name="Ghigo J.M."/>
            <person name="Gilles A.M."/>
            <person name="Johnson J."/>
            <person name="Le Bouguenec C."/>
            <person name="Lescat M."/>
            <person name="Mangenot S."/>
            <person name="Martinez-Jehanne V."/>
            <person name="Matic I."/>
            <person name="Nassif X."/>
            <person name="Oztas S."/>
            <person name="Petit M.A."/>
            <person name="Pichon C."/>
            <person name="Rouy Z."/>
            <person name="Ruf C.S."/>
            <person name="Schneider D."/>
            <person name="Tourret J."/>
            <person name="Vacherie B."/>
            <person name="Vallenet D."/>
            <person name="Medigue C."/>
            <person name="Rocha E.P.C."/>
            <person name="Denamur E."/>
        </authorList>
    </citation>
    <scope>NUCLEOTIDE SEQUENCE [LARGE SCALE GENOMIC DNA]</scope>
    <source>
        <strain>IAI1</strain>
    </source>
</reference>
<accession>B7M4C1</accession>
<dbReference type="EMBL" id="CU928160">
    <property type="protein sequence ID" value="CAR00604.1"/>
    <property type="molecule type" value="Genomic_DNA"/>
</dbReference>
<dbReference type="RefSeq" id="WP_000091955.1">
    <property type="nucleotide sequence ID" value="NC_011741.1"/>
</dbReference>
<dbReference type="SMR" id="B7M4C1"/>
<dbReference type="GeneID" id="93778350"/>
<dbReference type="KEGG" id="ecr:ECIAI1_3807"/>
<dbReference type="HOGENOM" id="CLU_064548_3_1_6"/>
<dbReference type="GO" id="GO:0022625">
    <property type="term" value="C:cytosolic large ribosomal subunit"/>
    <property type="evidence" value="ECO:0007669"/>
    <property type="project" value="TreeGrafter"/>
</dbReference>
<dbReference type="GO" id="GO:0003735">
    <property type="term" value="F:structural constituent of ribosome"/>
    <property type="evidence" value="ECO:0007669"/>
    <property type="project" value="InterPro"/>
</dbReference>
<dbReference type="GO" id="GO:0006412">
    <property type="term" value="P:translation"/>
    <property type="evidence" value="ECO:0007669"/>
    <property type="project" value="UniProtKB-UniRule"/>
</dbReference>
<dbReference type="FunFam" id="2.30.170.40:FF:000001">
    <property type="entry name" value="50S ribosomal protein L28"/>
    <property type="match status" value="1"/>
</dbReference>
<dbReference type="Gene3D" id="2.30.170.40">
    <property type="entry name" value="Ribosomal protein L28/L24"/>
    <property type="match status" value="1"/>
</dbReference>
<dbReference type="HAMAP" id="MF_00373">
    <property type="entry name" value="Ribosomal_bL28"/>
    <property type="match status" value="1"/>
</dbReference>
<dbReference type="InterPro" id="IPR026569">
    <property type="entry name" value="Ribosomal_bL28"/>
</dbReference>
<dbReference type="InterPro" id="IPR034704">
    <property type="entry name" value="Ribosomal_bL28/bL31-like_sf"/>
</dbReference>
<dbReference type="InterPro" id="IPR001383">
    <property type="entry name" value="Ribosomal_bL28_bact-type"/>
</dbReference>
<dbReference type="InterPro" id="IPR037147">
    <property type="entry name" value="Ribosomal_bL28_sf"/>
</dbReference>
<dbReference type="NCBIfam" id="TIGR00009">
    <property type="entry name" value="L28"/>
    <property type="match status" value="1"/>
</dbReference>
<dbReference type="PANTHER" id="PTHR13528">
    <property type="entry name" value="39S RIBOSOMAL PROTEIN L28, MITOCHONDRIAL"/>
    <property type="match status" value="1"/>
</dbReference>
<dbReference type="PANTHER" id="PTHR13528:SF2">
    <property type="entry name" value="LARGE RIBOSOMAL SUBUNIT PROTEIN BL28M"/>
    <property type="match status" value="1"/>
</dbReference>
<dbReference type="Pfam" id="PF00830">
    <property type="entry name" value="Ribosomal_L28"/>
    <property type="match status" value="1"/>
</dbReference>
<dbReference type="SUPFAM" id="SSF143800">
    <property type="entry name" value="L28p-like"/>
    <property type="match status" value="1"/>
</dbReference>
<protein>
    <recommendedName>
        <fullName evidence="1">Large ribosomal subunit protein bL28</fullName>
    </recommendedName>
    <alternativeName>
        <fullName evidence="2">50S ribosomal protein L28</fullName>
    </alternativeName>
</protein>
<sequence>MSRVCQVTGKRPVTGNNRSHALNATKRRFLPNLHSHRFWVESEKRFVTLRVSAKGMRVIDKKGIDTVLAELRARGEKY</sequence>
<keyword id="KW-0687">Ribonucleoprotein</keyword>
<keyword id="KW-0689">Ribosomal protein</keyword>
<comment type="similarity">
    <text evidence="1">Belongs to the bacterial ribosomal protein bL28 family.</text>
</comment>
<evidence type="ECO:0000255" key="1">
    <source>
        <dbReference type="HAMAP-Rule" id="MF_00373"/>
    </source>
</evidence>
<evidence type="ECO:0000305" key="2"/>
<feature type="chain" id="PRO_1000121628" description="Large ribosomal subunit protein bL28">
    <location>
        <begin position="1"/>
        <end position="78"/>
    </location>
</feature>